<gene>
    <name evidence="1" type="primary">ftsL</name>
    <name type="ordered locus">MEPCIT_215</name>
</gene>
<name>FTSL_MOREP</name>
<organism>
    <name type="scientific">Moranella endobia (strain PCIT)</name>
    <dbReference type="NCBI Taxonomy" id="903503"/>
    <lineage>
        <taxon>Bacteria</taxon>
        <taxon>Pseudomonadati</taxon>
        <taxon>Pseudomonadota</taxon>
        <taxon>Gammaproteobacteria</taxon>
        <taxon>Enterobacterales</taxon>
        <taxon>Enterobacteriaceae</taxon>
        <taxon>Candidatus Moranella</taxon>
    </lineage>
</organism>
<keyword id="KW-0131">Cell cycle</keyword>
<keyword id="KW-0132">Cell division</keyword>
<keyword id="KW-0997">Cell inner membrane</keyword>
<keyword id="KW-1003">Cell membrane</keyword>
<keyword id="KW-0472">Membrane</keyword>
<keyword id="KW-1185">Reference proteome</keyword>
<keyword id="KW-0812">Transmembrane</keyword>
<keyword id="KW-1133">Transmembrane helix</keyword>
<accession>F7XXN6</accession>
<comment type="function">
    <text evidence="1">Essential cell division protein. May link together the upstream cell division proteins, which are predominantly cytoplasmic, with the downstream cell division proteins, which are predominantly periplasmic.</text>
</comment>
<comment type="subunit">
    <text evidence="1">Part of a complex composed of FtsB, FtsL and FtsQ.</text>
</comment>
<comment type="subcellular location">
    <subcellularLocation>
        <location evidence="1">Cell inner membrane</location>
        <topology evidence="1">Single-pass type II membrane protein</topology>
    </subcellularLocation>
    <text evidence="1">Localizes to the division septum where it forms a ring structure.</text>
</comment>
<comment type="similarity">
    <text evidence="1">Belongs to the FtsL family.</text>
</comment>
<sequence>MIDRKHYHLVGSIGKDILNNGKLPALLLIAVLASSSLVVITTYQTRRLTVEREQLLLEQNILDIEWRNLILEDNVISDQSRFEFVATEQ</sequence>
<reference key="1">
    <citation type="journal article" date="2011" name="Curr. Biol.">
        <title>An interdependent metabolic patchwork in the nested symbiosis of mealybugs.</title>
        <authorList>
            <person name="McCutcheon J.P."/>
            <person name="von Dohlen C.D."/>
        </authorList>
    </citation>
    <scope>NUCLEOTIDE SEQUENCE [LARGE SCALE GENOMIC DNA]</scope>
    <source>
        <strain>PCIT</strain>
    </source>
</reference>
<evidence type="ECO:0000255" key="1">
    <source>
        <dbReference type="HAMAP-Rule" id="MF_00910"/>
    </source>
</evidence>
<dbReference type="EMBL" id="CP002243">
    <property type="protein sequence ID" value="AEI74862.1"/>
    <property type="molecule type" value="Genomic_DNA"/>
</dbReference>
<dbReference type="RefSeq" id="WP_013975613.1">
    <property type="nucleotide sequence ID" value="NC_015735.1"/>
</dbReference>
<dbReference type="SMR" id="F7XXN6"/>
<dbReference type="STRING" id="903503.MEPCIT_215"/>
<dbReference type="KEGG" id="men:MEPCIT_215"/>
<dbReference type="eggNOG" id="COG3116">
    <property type="taxonomic scope" value="Bacteria"/>
</dbReference>
<dbReference type="HOGENOM" id="CLU_156524_2_0_6"/>
<dbReference type="OrthoDB" id="6196803at2"/>
<dbReference type="Proteomes" id="UP000000504">
    <property type="component" value="Chromosome"/>
</dbReference>
<dbReference type="GO" id="GO:0032153">
    <property type="term" value="C:cell division site"/>
    <property type="evidence" value="ECO:0007669"/>
    <property type="project" value="TreeGrafter"/>
</dbReference>
<dbReference type="GO" id="GO:0005886">
    <property type="term" value="C:plasma membrane"/>
    <property type="evidence" value="ECO:0007669"/>
    <property type="project" value="UniProtKB-SubCell"/>
</dbReference>
<dbReference type="GO" id="GO:0043093">
    <property type="term" value="P:FtsZ-dependent cytokinesis"/>
    <property type="evidence" value="ECO:0007669"/>
    <property type="project" value="TreeGrafter"/>
</dbReference>
<dbReference type="InterPro" id="IPR011922">
    <property type="entry name" value="Cell_div_FtsL"/>
</dbReference>
<dbReference type="NCBIfam" id="TIGR02209">
    <property type="entry name" value="ftsL_broad"/>
    <property type="match status" value="1"/>
</dbReference>
<dbReference type="NCBIfam" id="NF008040">
    <property type="entry name" value="PRK10772.1"/>
    <property type="match status" value="1"/>
</dbReference>
<dbReference type="PANTHER" id="PTHR37479">
    <property type="entry name" value="CELL DIVISION PROTEIN FTSL"/>
    <property type="match status" value="1"/>
</dbReference>
<dbReference type="PANTHER" id="PTHR37479:SF1">
    <property type="entry name" value="CELL DIVISION PROTEIN FTSL"/>
    <property type="match status" value="1"/>
</dbReference>
<dbReference type="Pfam" id="PF04999">
    <property type="entry name" value="FtsL"/>
    <property type="match status" value="1"/>
</dbReference>
<feature type="chain" id="PRO_0000414562" description="Cell division protein FtsL">
    <location>
        <begin position="1"/>
        <end position="89"/>
    </location>
</feature>
<feature type="topological domain" description="Cytoplasmic" evidence="1">
    <location>
        <begin position="1"/>
        <end position="22"/>
    </location>
</feature>
<feature type="transmembrane region" description="Helical" evidence="1">
    <location>
        <begin position="23"/>
        <end position="40"/>
    </location>
</feature>
<feature type="topological domain" description="Periplasmic" evidence="1">
    <location>
        <begin position="41"/>
        <end position="89"/>
    </location>
</feature>
<protein>
    <recommendedName>
        <fullName evidence="1">Cell division protein FtsL</fullName>
    </recommendedName>
</protein>
<proteinExistence type="inferred from homology"/>